<evidence type="ECO:0000250" key="1">
    <source>
        <dbReference type="UniProtKB" id="Q8TB73"/>
    </source>
</evidence>
<evidence type="ECO:0000255" key="2"/>
<evidence type="ECO:0000269" key="3">
    <source>
    </source>
</evidence>
<evidence type="ECO:0000269" key="4">
    <source>
    </source>
</evidence>
<evidence type="ECO:0000269" key="5">
    <source>
    </source>
</evidence>
<evidence type="ECO:0000269" key="6">
    <source>
    </source>
</evidence>
<evidence type="ECO:0000305" key="7"/>
<comment type="function">
    <text evidence="1 3 5 6">Secretory protein that plays a role in various cellular processes. Acts as a chemorepellent acting on gonadotropin-releasing hormone (GnRH) expressing neurons regulating their migration to the hypothalamus (PubMed:31883645). Also promotes neuron migration, growth and survival as well as neurite outgrowth and is involved in the development of the olfactory system (PubMed:31883645). May also act through the regulation of growth factors activity and downstream signaling (By similarity). Also regulates extracellular matrix assembly and cell adhesiveness (PubMed:18757743). Promotes endothelial cell survival, vessel formation and plays an important role in the process of revascularization through NOS3-dependent mechanisms (PubMed:24706764).</text>
</comment>
<comment type="subunit">
    <text evidence="3">Binds heparin and chondroitin sulfate.</text>
</comment>
<comment type="subcellular location">
    <subcellularLocation>
        <location evidence="3">Secreted</location>
    </subcellularLocation>
</comment>
<comment type="tissue specificity">
    <text evidence="4 6">Expressed in brain and spinal cord with no expression detected in heart, kidney or liver. Expressed by neurons but not by astrocytes. In the brain, detected in the cerebrum, cerebellum and olfactory bulbs. In the cerebral cortex, highly expressed in Cajal-Retzius cells. Also expressed in hippocampal neurons and in Purkinje and granule cells of the cerebellum (at protein level) (PubMed:20969804). Expressed in neurons along the GnRH migratory route.</text>
</comment>
<comment type="developmental stage">
    <text evidence="3 4">At 16.5 dpc, specifically expressed in the interfollicular basal cells of the epidermis (at protein level). Detected in the marginal cells and cortical plate of the brain cortex from 16 dpc to P90 with high levels between 16 dpc and P0 and lower levels from P7 to adulthood (at protein level).</text>
</comment>
<comment type="induction">
    <text evidence="5">Up-regulated in endothelial cells of muscles after hind limb ischemic surgery.</text>
</comment>
<comment type="PTM">
    <text evidence="4">O-glycosylated; contains heparan sulfate and chondroitin sulfate.</text>
</comment>
<comment type="PTM">
    <text evidence="4">N-glycosylated.</text>
</comment>
<comment type="disruption phenotype">
    <text evidence="6">Knockout mice lacking Ndnf are grossly normal and able to produce viable pups (PubMed:31883645). Absence of Ndnf in 13.5 dpc embryos results in abnormal development of the olfactory system and defective gonadotropin-releasing hormone (GnRH) expressing neurons migration to the hypothalamus (PubMed:31883645).</text>
</comment>
<comment type="sequence caution" evidence="7">
    <conflict type="frameshift">
        <sequence resource="EMBL-CDS" id="BAC33925"/>
    </conflict>
</comment>
<protein>
    <recommendedName>
        <fullName>Protein NDNF</fullName>
    </recommendedName>
    <alternativeName>
        <fullName>Epidermacan</fullName>
    </alternativeName>
    <alternativeName>
        <fullName>Neuron-derived neurotrophic factor</fullName>
    </alternativeName>
</protein>
<proteinExistence type="evidence at protein level"/>
<feature type="signal peptide" evidence="2">
    <location>
        <begin position="1"/>
        <end position="19"/>
    </location>
</feature>
<feature type="chain" id="PRO_0000301966" description="Protein NDNF">
    <location>
        <begin position="20"/>
        <end position="568"/>
    </location>
</feature>
<feature type="domain" description="Fibronectin type-III 1">
    <location>
        <begin position="261"/>
        <end position="331"/>
    </location>
</feature>
<feature type="domain" description="Fibronectin type-III 2">
    <location>
        <begin position="445"/>
        <end position="564"/>
    </location>
</feature>
<feature type="glycosylation site" description="N-linked (GlcNAc...) asparagine" evidence="2">
    <location>
        <position position="322"/>
    </location>
</feature>
<feature type="glycosylation site" description="N-linked (GlcNAc...) asparagine" evidence="2">
    <location>
        <position position="488"/>
    </location>
</feature>
<feature type="sequence conflict" description="In Ref. 1; BAC33925." evidence="7" ref="1">
    <original>R</original>
    <variation>T</variation>
    <location>
        <position position="58"/>
    </location>
</feature>
<feature type="sequence conflict" description="In Ref. 1; BAC26349." evidence="7" ref="1">
    <original>R</original>
    <variation>K</variation>
    <location>
        <position position="425"/>
    </location>
</feature>
<organism>
    <name type="scientific">Mus musculus</name>
    <name type="common">Mouse</name>
    <dbReference type="NCBI Taxonomy" id="10090"/>
    <lineage>
        <taxon>Eukaryota</taxon>
        <taxon>Metazoa</taxon>
        <taxon>Chordata</taxon>
        <taxon>Craniata</taxon>
        <taxon>Vertebrata</taxon>
        <taxon>Euteleostomi</taxon>
        <taxon>Mammalia</taxon>
        <taxon>Eutheria</taxon>
        <taxon>Euarchontoglires</taxon>
        <taxon>Glires</taxon>
        <taxon>Rodentia</taxon>
        <taxon>Myomorpha</taxon>
        <taxon>Muroidea</taxon>
        <taxon>Muridae</taxon>
        <taxon>Murinae</taxon>
        <taxon>Mus</taxon>
        <taxon>Mus</taxon>
    </lineage>
</organism>
<dbReference type="EMBL" id="AK029210">
    <property type="protein sequence ID" value="BAC26349.1"/>
    <property type="molecule type" value="mRNA"/>
</dbReference>
<dbReference type="EMBL" id="AK049802">
    <property type="protein sequence ID" value="BAC33925.1"/>
    <property type="status" value="ALT_FRAME"/>
    <property type="molecule type" value="mRNA"/>
</dbReference>
<dbReference type="EMBL" id="BC047154">
    <property type="protein sequence ID" value="AAH47154.1"/>
    <property type="molecule type" value="mRNA"/>
</dbReference>
<dbReference type="CCDS" id="CCDS20207.1"/>
<dbReference type="RefSeq" id="NP_765987.2">
    <property type="nucleotide sequence ID" value="NM_172399.3"/>
</dbReference>
<dbReference type="RefSeq" id="XP_006506591.1">
    <property type="nucleotide sequence ID" value="XM_006506528.5"/>
</dbReference>
<dbReference type="FunCoup" id="Q8C119">
    <property type="interactions" value="305"/>
</dbReference>
<dbReference type="IntAct" id="Q8C119">
    <property type="interactions" value="1"/>
</dbReference>
<dbReference type="STRING" id="10090.ENSMUSP00000051297"/>
<dbReference type="GlyCosmos" id="Q8C119">
    <property type="glycosylation" value="2 sites, No reported glycans"/>
</dbReference>
<dbReference type="GlyGen" id="Q8C119">
    <property type="glycosylation" value="3 sites"/>
</dbReference>
<dbReference type="PhosphoSitePlus" id="Q8C119"/>
<dbReference type="jPOST" id="Q8C119"/>
<dbReference type="PaxDb" id="10090-ENSMUSP00000051297"/>
<dbReference type="ProteomicsDB" id="287461"/>
<dbReference type="Antibodypedia" id="52933">
    <property type="antibodies" value="89 antibodies from 17 providers"/>
</dbReference>
<dbReference type="DNASU" id="68169"/>
<dbReference type="Ensembl" id="ENSMUST00000054351.6">
    <property type="protein sequence ID" value="ENSMUSP00000051297.5"/>
    <property type="gene ID" value="ENSMUSG00000049001.6"/>
</dbReference>
<dbReference type="GeneID" id="68169"/>
<dbReference type="KEGG" id="mmu:68169"/>
<dbReference type="UCSC" id="uc009cei.1">
    <property type="organism name" value="mouse"/>
</dbReference>
<dbReference type="AGR" id="MGI:1915419"/>
<dbReference type="CTD" id="79625"/>
<dbReference type="MGI" id="MGI:1915419">
    <property type="gene designation" value="Ndnf"/>
</dbReference>
<dbReference type="VEuPathDB" id="HostDB:ENSMUSG00000049001"/>
<dbReference type="eggNOG" id="KOG4806">
    <property type="taxonomic scope" value="Eukaryota"/>
</dbReference>
<dbReference type="GeneTree" id="ENSGT00390000007586"/>
<dbReference type="HOGENOM" id="CLU_041753_0_0_1"/>
<dbReference type="InParanoid" id="Q8C119"/>
<dbReference type="OMA" id="YLFRDTS"/>
<dbReference type="OrthoDB" id="9872501at2759"/>
<dbReference type="PhylomeDB" id="Q8C119"/>
<dbReference type="TreeFam" id="TF313245"/>
<dbReference type="BioGRID-ORCS" id="68169">
    <property type="hits" value="2 hits in 80 CRISPR screens"/>
</dbReference>
<dbReference type="PRO" id="PR:Q8C119"/>
<dbReference type="Proteomes" id="UP000000589">
    <property type="component" value="Chromosome 6"/>
</dbReference>
<dbReference type="RNAct" id="Q8C119">
    <property type="molecule type" value="protein"/>
</dbReference>
<dbReference type="Bgee" id="ENSMUSG00000049001">
    <property type="expression patterns" value="Expressed in vault of skull and 187 other cell types or tissues"/>
</dbReference>
<dbReference type="GO" id="GO:0031012">
    <property type="term" value="C:extracellular matrix"/>
    <property type="evidence" value="ECO:0000314"/>
    <property type="project" value="MGI"/>
</dbReference>
<dbReference type="GO" id="GO:0005576">
    <property type="term" value="C:extracellular region"/>
    <property type="evidence" value="ECO:0000250"/>
    <property type="project" value="UniProtKB"/>
</dbReference>
<dbReference type="GO" id="GO:0005615">
    <property type="term" value="C:extracellular space"/>
    <property type="evidence" value="ECO:0007669"/>
    <property type="project" value="Ensembl"/>
</dbReference>
<dbReference type="GO" id="GO:0005539">
    <property type="term" value="F:glycosaminoglycan binding"/>
    <property type="evidence" value="ECO:0000314"/>
    <property type="project" value="MGI"/>
</dbReference>
<dbReference type="GO" id="GO:0008201">
    <property type="term" value="F:heparin binding"/>
    <property type="evidence" value="ECO:0000314"/>
    <property type="project" value="MGI"/>
</dbReference>
<dbReference type="GO" id="GO:0001525">
    <property type="term" value="P:angiogenesis"/>
    <property type="evidence" value="ECO:0000250"/>
    <property type="project" value="UniProtKB"/>
</dbReference>
<dbReference type="GO" id="GO:0044344">
    <property type="term" value="P:cellular response to fibroblast growth factor stimulus"/>
    <property type="evidence" value="ECO:0000250"/>
    <property type="project" value="UniProtKB"/>
</dbReference>
<dbReference type="GO" id="GO:0071456">
    <property type="term" value="P:cellular response to hypoxia"/>
    <property type="evidence" value="ECO:0007669"/>
    <property type="project" value="Ensembl"/>
</dbReference>
<dbReference type="GO" id="GO:0030198">
    <property type="term" value="P:extracellular matrix organization"/>
    <property type="evidence" value="ECO:0000314"/>
    <property type="project" value="MGI"/>
</dbReference>
<dbReference type="GO" id="GO:0021828">
    <property type="term" value="P:gonadotrophin-releasing hormone neuronal migration to the hypothalamus"/>
    <property type="evidence" value="ECO:0000315"/>
    <property type="project" value="UniProtKB"/>
</dbReference>
<dbReference type="GO" id="GO:2000352">
    <property type="term" value="P:negative regulation of endothelial cell apoptotic process"/>
    <property type="evidence" value="ECO:0000250"/>
    <property type="project" value="UniProtKB"/>
</dbReference>
<dbReference type="GO" id="GO:0043524">
    <property type="term" value="P:negative regulation of neuron apoptotic process"/>
    <property type="evidence" value="ECO:0000250"/>
    <property type="project" value="UniProtKB"/>
</dbReference>
<dbReference type="GO" id="GO:0001764">
    <property type="term" value="P:neuron migration"/>
    <property type="evidence" value="ECO:0000250"/>
    <property type="project" value="UniProtKB"/>
</dbReference>
<dbReference type="GO" id="GO:0007263">
    <property type="term" value="P:nitric oxide mediated signal transduction"/>
    <property type="evidence" value="ECO:0000250"/>
    <property type="project" value="UniProtKB"/>
</dbReference>
<dbReference type="GO" id="GO:0010811">
    <property type="term" value="P:positive regulation of cell-substrate adhesion"/>
    <property type="evidence" value="ECO:0000314"/>
    <property type="project" value="MGI"/>
</dbReference>
<dbReference type="GO" id="GO:0010976">
    <property type="term" value="P:positive regulation of neuron projection development"/>
    <property type="evidence" value="ECO:0000250"/>
    <property type="project" value="UniProtKB"/>
</dbReference>
<dbReference type="GO" id="GO:0002931">
    <property type="term" value="P:response to ischemia"/>
    <property type="evidence" value="ECO:0000314"/>
    <property type="project" value="UniProtKB"/>
</dbReference>
<dbReference type="GO" id="GO:0061042">
    <property type="term" value="P:vascular wound healing"/>
    <property type="evidence" value="ECO:0000315"/>
    <property type="project" value="UniProtKB"/>
</dbReference>
<dbReference type="Gene3D" id="2.60.40.10">
    <property type="entry name" value="Immunoglobulins"/>
    <property type="match status" value="1"/>
</dbReference>
<dbReference type="InterPro" id="IPR003961">
    <property type="entry name" value="FN3_dom"/>
</dbReference>
<dbReference type="InterPro" id="IPR036116">
    <property type="entry name" value="FN3_sf"/>
</dbReference>
<dbReference type="InterPro" id="IPR013783">
    <property type="entry name" value="Ig-like_fold"/>
</dbReference>
<dbReference type="InterPro" id="IPR019326">
    <property type="entry name" value="NDNF"/>
</dbReference>
<dbReference type="InterPro" id="IPR045805">
    <property type="entry name" value="NDNF_C"/>
</dbReference>
<dbReference type="InterPro" id="IPR055271">
    <property type="entry name" value="NDNF_Fn(III)_1"/>
</dbReference>
<dbReference type="InterPro" id="IPR056225">
    <property type="entry name" value="NDNF_N"/>
</dbReference>
<dbReference type="PANTHER" id="PTHR14619">
    <property type="entry name" value="NEURON-DERIVED NEUROTROPHIC FACTOR"/>
    <property type="match status" value="1"/>
</dbReference>
<dbReference type="PANTHER" id="PTHR14619:SF1">
    <property type="entry name" value="PROTEIN NDNF"/>
    <property type="match status" value="1"/>
</dbReference>
<dbReference type="Pfam" id="PF10179">
    <property type="entry name" value="NDNF"/>
    <property type="match status" value="1"/>
</dbReference>
<dbReference type="Pfam" id="PF19433">
    <property type="entry name" value="NDNF_C"/>
    <property type="match status" value="1"/>
</dbReference>
<dbReference type="Pfam" id="PF24354">
    <property type="entry name" value="NDNF_N"/>
    <property type="match status" value="1"/>
</dbReference>
<dbReference type="SMART" id="SM00060">
    <property type="entry name" value="FN3"/>
    <property type="match status" value="2"/>
</dbReference>
<dbReference type="SUPFAM" id="SSF49265">
    <property type="entry name" value="Fibronectin type III"/>
    <property type="match status" value="1"/>
</dbReference>
<accession>Q8C119</accession>
<accession>Q80VN3</accession>
<accession>Q8BWV6</accession>
<sequence>MELFYWCLLCLLLPLTSRTQKLPTRDEELFQMQIRDKEFFHDSSVIPDGAEVSSYLFRDTPRRYFFMVEEDNTPLSVTVTPCDAPLEWKLSLQELHEGSSADGSGDPELLDQQKQQMTDVEGTELFSYKGNDVEYFLSSSSPSGLYQLELLSTEKDTHFKVYATTTPESDQPYPELPYDPRVDVTSFGRTTVTLAWKPSPTASILKQPIEYCVVINKEHNFKSLCAAETKMNADDAFMVAPKPGLDFNPFDFAHFGFPTDNLGKDRSLLAKPSPKVGRHVYWRPKVDIQKICIGNKNIFTVSDLKPDTQYYFDVFMVNTNTNMSTAYVGAFVRTKEEAKQKTVELKDGRVTDVFVKRKGKKFLRFAPVSSHQKVTFFIHSCMDAVQVQVRRDGRLLLSQNVEGIRQFQLRGKPKGKYLIRLKGNRKGASKLKILATTRPSKHAFPSLPEDTRIKAFDKLRTCSSVTVAWLGTQERRKFCIYRKEVDGNYSEDQKRREQNQCLGPDTRKKSEKVLCKYFHSQNLQKAVTTETIRDLQPGKSYLLDVYVVGHGGHSVKYQSKIVKTRKVC</sequence>
<name>NDNF_MOUSE</name>
<keyword id="KW-0325">Glycoprotein</keyword>
<keyword id="KW-0524">Neurogenesis</keyword>
<keyword id="KW-1185">Reference proteome</keyword>
<keyword id="KW-0677">Repeat</keyword>
<keyword id="KW-0964">Secreted</keyword>
<keyword id="KW-0732">Signal</keyword>
<reference key="1">
    <citation type="journal article" date="2005" name="Science">
        <title>The transcriptional landscape of the mammalian genome.</title>
        <authorList>
            <person name="Carninci P."/>
            <person name="Kasukawa T."/>
            <person name="Katayama S."/>
            <person name="Gough J."/>
            <person name="Frith M.C."/>
            <person name="Maeda N."/>
            <person name="Oyama R."/>
            <person name="Ravasi T."/>
            <person name="Lenhard B."/>
            <person name="Wells C."/>
            <person name="Kodzius R."/>
            <person name="Shimokawa K."/>
            <person name="Bajic V.B."/>
            <person name="Brenner S.E."/>
            <person name="Batalov S."/>
            <person name="Forrest A.R."/>
            <person name="Zavolan M."/>
            <person name="Davis M.J."/>
            <person name="Wilming L.G."/>
            <person name="Aidinis V."/>
            <person name="Allen J.E."/>
            <person name="Ambesi-Impiombato A."/>
            <person name="Apweiler R."/>
            <person name="Aturaliya R.N."/>
            <person name="Bailey T.L."/>
            <person name="Bansal M."/>
            <person name="Baxter L."/>
            <person name="Beisel K.W."/>
            <person name="Bersano T."/>
            <person name="Bono H."/>
            <person name="Chalk A.M."/>
            <person name="Chiu K.P."/>
            <person name="Choudhary V."/>
            <person name="Christoffels A."/>
            <person name="Clutterbuck D.R."/>
            <person name="Crowe M.L."/>
            <person name="Dalla E."/>
            <person name="Dalrymple B.P."/>
            <person name="de Bono B."/>
            <person name="Della Gatta G."/>
            <person name="di Bernardo D."/>
            <person name="Down T."/>
            <person name="Engstrom P."/>
            <person name="Fagiolini M."/>
            <person name="Faulkner G."/>
            <person name="Fletcher C.F."/>
            <person name="Fukushima T."/>
            <person name="Furuno M."/>
            <person name="Futaki S."/>
            <person name="Gariboldi M."/>
            <person name="Georgii-Hemming P."/>
            <person name="Gingeras T.R."/>
            <person name="Gojobori T."/>
            <person name="Green R.E."/>
            <person name="Gustincich S."/>
            <person name="Harbers M."/>
            <person name="Hayashi Y."/>
            <person name="Hensch T.K."/>
            <person name="Hirokawa N."/>
            <person name="Hill D."/>
            <person name="Huminiecki L."/>
            <person name="Iacono M."/>
            <person name="Ikeo K."/>
            <person name="Iwama A."/>
            <person name="Ishikawa T."/>
            <person name="Jakt M."/>
            <person name="Kanapin A."/>
            <person name="Katoh M."/>
            <person name="Kawasawa Y."/>
            <person name="Kelso J."/>
            <person name="Kitamura H."/>
            <person name="Kitano H."/>
            <person name="Kollias G."/>
            <person name="Krishnan S.P."/>
            <person name="Kruger A."/>
            <person name="Kummerfeld S.K."/>
            <person name="Kurochkin I.V."/>
            <person name="Lareau L.F."/>
            <person name="Lazarevic D."/>
            <person name="Lipovich L."/>
            <person name="Liu J."/>
            <person name="Liuni S."/>
            <person name="McWilliam S."/>
            <person name="Madan Babu M."/>
            <person name="Madera M."/>
            <person name="Marchionni L."/>
            <person name="Matsuda H."/>
            <person name="Matsuzawa S."/>
            <person name="Miki H."/>
            <person name="Mignone F."/>
            <person name="Miyake S."/>
            <person name="Morris K."/>
            <person name="Mottagui-Tabar S."/>
            <person name="Mulder N."/>
            <person name="Nakano N."/>
            <person name="Nakauchi H."/>
            <person name="Ng P."/>
            <person name="Nilsson R."/>
            <person name="Nishiguchi S."/>
            <person name="Nishikawa S."/>
            <person name="Nori F."/>
            <person name="Ohara O."/>
            <person name="Okazaki Y."/>
            <person name="Orlando V."/>
            <person name="Pang K.C."/>
            <person name="Pavan W.J."/>
            <person name="Pavesi G."/>
            <person name="Pesole G."/>
            <person name="Petrovsky N."/>
            <person name="Piazza S."/>
            <person name="Reed J."/>
            <person name="Reid J.F."/>
            <person name="Ring B.Z."/>
            <person name="Ringwald M."/>
            <person name="Rost B."/>
            <person name="Ruan Y."/>
            <person name="Salzberg S.L."/>
            <person name="Sandelin A."/>
            <person name="Schneider C."/>
            <person name="Schoenbach C."/>
            <person name="Sekiguchi K."/>
            <person name="Semple C.A."/>
            <person name="Seno S."/>
            <person name="Sessa L."/>
            <person name="Sheng Y."/>
            <person name="Shibata Y."/>
            <person name="Shimada H."/>
            <person name="Shimada K."/>
            <person name="Silva D."/>
            <person name="Sinclair B."/>
            <person name="Sperling S."/>
            <person name="Stupka E."/>
            <person name="Sugiura K."/>
            <person name="Sultana R."/>
            <person name="Takenaka Y."/>
            <person name="Taki K."/>
            <person name="Tammoja K."/>
            <person name="Tan S.L."/>
            <person name="Tang S."/>
            <person name="Taylor M.S."/>
            <person name="Tegner J."/>
            <person name="Teichmann S.A."/>
            <person name="Ueda H.R."/>
            <person name="van Nimwegen E."/>
            <person name="Verardo R."/>
            <person name="Wei C.L."/>
            <person name="Yagi K."/>
            <person name="Yamanishi H."/>
            <person name="Zabarovsky E."/>
            <person name="Zhu S."/>
            <person name="Zimmer A."/>
            <person name="Hide W."/>
            <person name="Bult C."/>
            <person name="Grimmond S.M."/>
            <person name="Teasdale R.D."/>
            <person name="Liu E.T."/>
            <person name="Brusic V."/>
            <person name="Quackenbush J."/>
            <person name="Wahlestedt C."/>
            <person name="Mattick J.S."/>
            <person name="Hume D.A."/>
            <person name="Kai C."/>
            <person name="Sasaki D."/>
            <person name="Tomaru Y."/>
            <person name="Fukuda S."/>
            <person name="Kanamori-Katayama M."/>
            <person name="Suzuki M."/>
            <person name="Aoki J."/>
            <person name="Arakawa T."/>
            <person name="Iida J."/>
            <person name="Imamura K."/>
            <person name="Itoh M."/>
            <person name="Kato T."/>
            <person name="Kawaji H."/>
            <person name="Kawagashira N."/>
            <person name="Kawashima T."/>
            <person name="Kojima M."/>
            <person name="Kondo S."/>
            <person name="Konno H."/>
            <person name="Nakano K."/>
            <person name="Ninomiya N."/>
            <person name="Nishio T."/>
            <person name="Okada M."/>
            <person name="Plessy C."/>
            <person name="Shibata K."/>
            <person name="Shiraki T."/>
            <person name="Suzuki S."/>
            <person name="Tagami M."/>
            <person name="Waki K."/>
            <person name="Watahiki A."/>
            <person name="Okamura-Oho Y."/>
            <person name="Suzuki H."/>
            <person name="Kawai J."/>
            <person name="Hayashizaki Y."/>
        </authorList>
    </citation>
    <scope>NUCLEOTIDE SEQUENCE [LARGE SCALE MRNA]</scope>
    <source>
        <strain>C57BL/6J</strain>
        <tissue>Head</tissue>
        <tissue>Spinal cord</tissue>
    </source>
</reference>
<reference key="2">
    <citation type="journal article" date="2004" name="Genome Res.">
        <title>The status, quality, and expansion of the NIH full-length cDNA project: the Mammalian Gene Collection (MGC).</title>
        <authorList>
            <consortium name="The MGC Project Team"/>
        </authorList>
    </citation>
    <scope>NUCLEOTIDE SEQUENCE [LARGE SCALE MRNA]</scope>
    <source>
        <tissue>Eye</tissue>
    </source>
</reference>
<reference key="3">
    <citation type="journal article" date="2008" name="Proc. Natl. Acad. Sci. U.S.A.">
        <title>Transcriptome-based systematic identification of extracellular matrix proteins.</title>
        <authorList>
            <person name="Manabe R."/>
            <person name="Tsutsui K."/>
            <person name="Yamada T."/>
            <person name="Kimura M."/>
            <person name="Nakano I."/>
            <person name="Shimono C."/>
            <person name="Sanzen N."/>
            <person name="Furutani Y."/>
            <person name="Fukuda T."/>
            <person name="Oguri Y."/>
            <person name="Shimamoto K."/>
            <person name="Kiyozumi D."/>
            <person name="Sato Y."/>
            <person name="Sado Y."/>
            <person name="Senoo H."/>
            <person name="Yamashina S."/>
            <person name="Fukuda S."/>
            <person name="Kawai J."/>
            <person name="Sugiura N."/>
            <person name="Kimata K."/>
            <person name="Hayashizaki Y."/>
            <person name="Sekiguchi K."/>
        </authorList>
    </citation>
    <scope>FUNCTION</scope>
    <scope>SUBUNIT</scope>
    <scope>SUBCELLULAR LOCATION</scope>
    <scope>GLYCOSYLATION</scope>
    <scope>DEVELOPMENTAL STAGE</scope>
</reference>
<reference key="4">
    <citation type="journal article" date="2010" name="BMC Neurosci.">
        <title>Spatio-temporal expression of a novel neuron-derived neurotrophic factor (NDNF) in mouse brains during development.</title>
        <authorList>
            <person name="Kuang X.L."/>
            <person name="Zhao X.M."/>
            <person name="Xu H.F."/>
            <person name="Shi Y.Y."/>
            <person name="Deng J.B."/>
            <person name="Sun G.T."/>
        </authorList>
    </citation>
    <scope>TISSUE SPECIFICITY</scope>
    <scope>DEVELOPMENTAL STAGE</scope>
    <scope>GLYCOSYLATION</scope>
</reference>
<reference key="5">
    <citation type="journal article" date="2014" name="J. Biol. Chem.">
        <title>Neuron-derived neurotrophic factor functions as a novel modulator that enhances endothelial cell function and revascularization processes.</title>
        <authorList>
            <person name="Ohashi K."/>
            <person name="Enomoto T."/>
            <person name="Joki Y."/>
            <person name="Shibata R."/>
            <person name="Ogura Y."/>
            <person name="Kataoka Y."/>
            <person name="Shimizu Y."/>
            <person name="Kambara T."/>
            <person name="Uemura Y."/>
            <person name="Yuasa D."/>
            <person name="Matsuo K."/>
            <person name="Hayakawa S."/>
            <person name="Hiramatsu-Ito M."/>
            <person name="Murohara T."/>
            <person name="Ouchi N."/>
        </authorList>
    </citation>
    <scope>INDUCTION</scope>
    <scope>FUNCTION</scope>
</reference>
<reference key="6">
    <citation type="journal article" date="2020" name="Am. J. Hum. Genet.">
        <title>Neuron-derived neurotrophic factor is mutated in congenital hypogonadotropic hypogonadism.</title>
        <authorList>
            <person name="Messina A."/>
            <person name="Pulli K."/>
            <person name="Santini S."/>
            <person name="Acierno J."/>
            <person name="Kaensaekoski J."/>
            <person name="Cassatella D."/>
            <person name="Xu C."/>
            <person name="Casoni F."/>
            <person name="Malone S.A."/>
            <person name="Ternier G."/>
            <person name="Conte D."/>
            <person name="Sidis Y."/>
            <person name="Tommiska J."/>
            <person name="Vaaralahti K."/>
            <person name="Dwyer A."/>
            <person name="Gothilf Y."/>
            <person name="Merlo G.R."/>
            <person name="Santoni F."/>
            <person name="Niederlaender N.J."/>
            <person name="Giacobini P."/>
            <person name="Raivio T."/>
            <person name="Pitteloud N."/>
        </authorList>
    </citation>
    <scope>FUNCTION</scope>
    <scope>DISRUPTION PHENOTYPE</scope>
    <scope>TISSUE SPECIFICITY</scope>
</reference>
<gene>
    <name type="primary">Ndnf</name>
</gene>